<gene>
    <name evidence="1" type="primary">murD</name>
    <name type="ordered locus">CPS_4467</name>
</gene>
<dbReference type="EC" id="6.3.2.9" evidence="1"/>
<dbReference type="EMBL" id="CP000083">
    <property type="protein sequence ID" value="AAZ24030.1"/>
    <property type="molecule type" value="Genomic_DNA"/>
</dbReference>
<dbReference type="RefSeq" id="WP_011045196.1">
    <property type="nucleotide sequence ID" value="NC_003910.7"/>
</dbReference>
<dbReference type="SMR" id="Q47VQ7"/>
<dbReference type="STRING" id="167879.CPS_4467"/>
<dbReference type="KEGG" id="cps:CPS_4467"/>
<dbReference type="HOGENOM" id="CLU_032540_1_0_6"/>
<dbReference type="UniPathway" id="UPA00219"/>
<dbReference type="Proteomes" id="UP000000547">
    <property type="component" value="Chromosome"/>
</dbReference>
<dbReference type="GO" id="GO:0005737">
    <property type="term" value="C:cytoplasm"/>
    <property type="evidence" value="ECO:0007669"/>
    <property type="project" value="UniProtKB-SubCell"/>
</dbReference>
<dbReference type="GO" id="GO:0005524">
    <property type="term" value="F:ATP binding"/>
    <property type="evidence" value="ECO:0007669"/>
    <property type="project" value="UniProtKB-UniRule"/>
</dbReference>
<dbReference type="GO" id="GO:0008764">
    <property type="term" value="F:UDP-N-acetylmuramoylalanine-D-glutamate ligase activity"/>
    <property type="evidence" value="ECO:0007669"/>
    <property type="project" value="UniProtKB-UniRule"/>
</dbReference>
<dbReference type="GO" id="GO:0051301">
    <property type="term" value="P:cell division"/>
    <property type="evidence" value="ECO:0007669"/>
    <property type="project" value="UniProtKB-KW"/>
</dbReference>
<dbReference type="GO" id="GO:0071555">
    <property type="term" value="P:cell wall organization"/>
    <property type="evidence" value="ECO:0007669"/>
    <property type="project" value="UniProtKB-KW"/>
</dbReference>
<dbReference type="GO" id="GO:0009252">
    <property type="term" value="P:peptidoglycan biosynthetic process"/>
    <property type="evidence" value="ECO:0007669"/>
    <property type="project" value="UniProtKB-UniRule"/>
</dbReference>
<dbReference type="GO" id="GO:0008360">
    <property type="term" value="P:regulation of cell shape"/>
    <property type="evidence" value="ECO:0007669"/>
    <property type="project" value="UniProtKB-KW"/>
</dbReference>
<dbReference type="Gene3D" id="3.90.190.20">
    <property type="entry name" value="Mur ligase, C-terminal domain"/>
    <property type="match status" value="1"/>
</dbReference>
<dbReference type="Gene3D" id="3.40.1190.10">
    <property type="entry name" value="Mur-like, catalytic domain"/>
    <property type="match status" value="1"/>
</dbReference>
<dbReference type="Gene3D" id="3.40.50.720">
    <property type="entry name" value="NAD(P)-binding Rossmann-like Domain"/>
    <property type="match status" value="1"/>
</dbReference>
<dbReference type="HAMAP" id="MF_00639">
    <property type="entry name" value="MurD"/>
    <property type="match status" value="1"/>
</dbReference>
<dbReference type="InterPro" id="IPR036565">
    <property type="entry name" value="Mur-like_cat_sf"/>
</dbReference>
<dbReference type="InterPro" id="IPR004101">
    <property type="entry name" value="Mur_ligase_C"/>
</dbReference>
<dbReference type="InterPro" id="IPR036615">
    <property type="entry name" value="Mur_ligase_C_dom_sf"/>
</dbReference>
<dbReference type="InterPro" id="IPR013221">
    <property type="entry name" value="Mur_ligase_cen"/>
</dbReference>
<dbReference type="InterPro" id="IPR005762">
    <property type="entry name" value="MurD"/>
</dbReference>
<dbReference type="NCBIfam" id="TIGR01087">
    <property type="entry name" value="murD"/>
    <property type="match status" value="1"/>
</dbReference>
<dbReference type="PANTHER" id="PTHR43692">
    <property type="entry name" value="UDP-N-ACETYLMURAMOYLALANINE--D-GLUTAMATE LIGASE"/>
    <property type="match status" value="1"/>
</dbReference>
<dbReference type="PANTHER" id="PTHR43692:SF1">
    <property type="entry name" value="UDP-N-ACETYLMURAMOYLALANINE--D-GLUTAMATE LIGASE"/>
    <property type="match status" value="1"/>
</dbReference>
<dbReference type="Pfam" id="PF02875">
    <property type="entry name" value="Mur_ligase_C"/>
    <property type="match status" value="1"/>
</dbReference>
<dbReference type="Pfam" id="PF08245">
    <property type="entry name" value="Mur_ligase_M"/>
    <property type="match status" value="1"/>
</dbReference>
<dbReference type="Pfam" id="PF21799">
    <property type="entry name" value="MurD-like_N"/>
    <property type="match status" value="1"/>
</dbReference>
<dbReference type="SUPFAM" id="SSF51984">
    <property type="entry name" value="MurCD N-terminal domain"/>
    <property type="match status" value="1"/>
</dbReference>
<dbReference type="SUPFAM" id="SSF53623">
    <property type="entry name" value="MurD-like peptide ligases, catalytic domain"/>
    <property type="match status" value="1"/>
</dbReference>
<dbReference type="SUPFAM" id="SSF53244">
    <property type="entry name" value="MurD-like peptide ligases, peptide-binding domain"/>
    <property type="match status" value="1"/>
</dbReference>
<comment type="function">
    <text evidence="1">Cell wall formation. Catalyzes the addition of glutamate to the nucleotide precursor UDP-N-acetylmuramoyl-L-alanine (UMA).</text>
</comment>
<comment type="catalytic activity">
    <reaction evidence="1">
        <text>UDP-N-acetyl-alpha-D-muramoyl-L-alanine + D-glutamate + ATP = UDP-N-acetyl-alpha-D-muramoyl-L-alanyl-D-glutamate + ADP + phosphate + H(+)</text>
        <dbReference type="Rhea" id="RHEA:16429"/>
        <dbReference type="ChEBI" id="CHEBI:15378"/>
        <dbReference type="ChEBI" id="CHEBI:29986"/>
        <dbReference type="ChEBI" id="CHEBI:30616"/>
        <dbReference type="ChEBI" id="CHEBI:43474"/>
        <dbReference type="ChEBI" id="CHEBI:83898"/>
        <dbReference type="ChEBI" id="CHEBI:83900"/>
        <dbReference type="ChEBI" id="CHEBI:456216"/>
        <dbReference type="EC" id="6.3.2.9"/>
    </reaction>
</comment>
<comment type="pathway">
    <text evidence="1">Cell wall biogenesis; peptidoglycan biosynthesis.</text>
</comment>
<comment type="subcellular location">
    <subcellularLocation>
        <location evidence="1">Cytoplasm</location>
    </subcellularLocation>
</comment>
<comment type="similarity">
    <text evidence="1">Belongs to the MurCDEF family.</text>
</comment>
<reference key="1">
    <citation type="journal article" date="2005" name="Proc. Natl. Acad. Sci. U.S.A.">
        <title>The psychrophilic lifestyle as revealed by the genome sequence of Colwellia psychrerythraea 34H through genomic and proteomic analyses.</title>
        <authorList>
            <person name="Methe B.A."/>
            <person name="Nelson K.E."/>
            <person name="Deming J.W."/>
            <person name="Momen B."/>
            <person name="Melamud E."/>
            <person name="Zhang X."/>
            <person name="Moult J."/>
            <person name="Madupu R."/>
            <person name="Nelson W.C."/>
            <person name="Dodson R.J."/>
            <person name="Brinkac L.M."/>
            <person name="Daugherty S.C."/>
            <person name="Durkin A.S."/>
            <person name="DeBoy R.T."/>
            <person name="Kolonay J.F."/>
            <person name="Sullivan S.A."/>
            <person name="Zhou L."/>
            <person name="Davidsen T.M."/>
            <person name="Wu M."/>
            <person name="Huston A.L."/>
            <person name="Lewis M."/>
            <person name="Weaver B."/>
            <person name="Weidman J.F."/>
            <person name="Khouri H."/>
            <person name="Utterback T.R."/>
            <person name="Feldblyum T.V."/>
            <person name="Fraser C.M."/>
        </authorList>
    </citation>
    <scope>NUCLEOTIDE SEQUENCE [LARGE SCALE GENOMIC DNA]</scope>
    <source>
        <strain>34H / ATCC BAA-681</strain>
    </source>
</reference>
<proteinExistence type="inferred from homology"/>
<protein>
    <recommendedName>
        <fullName evidence="1">UDP-N-acetylmuramoylalanine--D-glutamate ligase</fullName>
        <ecNumber evidence="1">6.3.2.9</ecNumber>
    </recommendedName>
    <alternativeName>
        <fullName evidence="1">D-glutamic acid-adding enzyme</fullName>
    </alternativeName>
    <alternativeName>
        <fullName evidence="1">UDP-N-acetylmuramoyl-L-alanyl-D-glutamate synthetase</fullName>
    </alternativeName>
</protein>
<keyword id="KW-0067">ATP-binding</keyword>
<keyword id="KW-0131">Cell cycle</keyword>
<keyword id="KW-0132">Cell division</keyword>
<keyword id="KW-0133">Cell shape</keyword>
<keyword id="KW-0961">Cell wall biogenesis/degradation</keyword>
<keyword id="KW-0963">Cytoplasm</keyword>
<keyword id="KW-0436">Ligase</keyword>
<keyword id="KW-0547">Nucleotide-binding</keyword>
<keyword id="KW-0573">Peptidoglycan synthesis</keyword>
<feature type="chain" id="PRO_0000109002" description="UDP-N-acetylmuramoylalanine--D-glutamate ligase">
    <location>
        <begin position="1"/>
        <end position="471"/>
    </location>
</feature>
<feature type="binding site" evidence="1">
    <location>
        <begin position="127"/>
        <end position="133"/>
    </location>
    <ligand>
        <name>ATP</name>
        <dbReference type="ChEBI" id="CHEBI:30616"/>
    </ligand>
</feature>
<organism>
    <name type="scientific">Colwellia psychrerythraea (strain 34H / ATCC BAA-681)</name>
    <name type="common">Vibrio psychroerythus</name>
    <dbReference type="NCBI Taxonomy" id="167879"/>
    <lineage>
        <taxon>Bacteria</taxon>
        <taxon>Pseudomonadati</taxon>
        <taxon>Pseudomonadota</taxon>
        <taxon>Gammaproteobacteria</taxon>
        <taxon>Alteromonadales</taxon>
        <taxon>Colwelliaceae</taxon>
        <taxon>Colwellia</taxon>
    </lineage>
</organism>
<evidence type="ECO:0000255" key="1">
    <source>
        <dbReference type="HAMAP-Rule" id="MF_00639"/>
    </source>
</evidence>
<sequence>MTWLTAFKDKNIVVLGAGMTGLSCLRFLHAQDLSFAVNDSRPMPFANRDEQTQYENDYPKAKFVFGQWQQSLISSADIIITSPGIDLVSEGITALIPENCLVIGDVELFCLVNNSRISPMKMLAVTGSNGKSTVVSLLASLAKAIGVNAALAGNIGEPILNLLHRENVYNSQLANQPDIVIVELSSFQLETLSSMHAIAASVLNLSDDHLDRHKTLANYQAIKQSIYPQAKIAVVSREDQASNTLVAAQEIISFGLNKPEQDCFGLQAIDNKMVMMFGEQALISIDELPLAGMHNALNYMAALALGYSAGWSLSAMTENLAGFMGLAHRCQRVASEDYIQWINDSKATNVGATLAAITGLVPTLTGQNKLILIAGGDGKGADFSALTTILNCDVNQLITLGKDGAEIASLVSDAIQVDTLREAVEQAKQIAKPGDMVLLSPACASIDMFKNYQVRGEQFIAAVQAKEDSCR</sequence>
<name>MURD_COLP3</name>
<accession>Q47VQ7</accession>